<comment type="function">
    <text evidence="1">Transport of potassium into the cell. Likely operates as a K(+):H(+) symporter.</text>
</comment>
<comment type="catalytic activity">
    <reaction evidence="1">
        <text>K(+)(in) + H(+)(in) = K(+)(out) + H(+)(out)</text>
        <dbReference type="Rhea" id="RHEA:28490"/>
        <dbReference type="ChEBI" id="CHEBI:15378"/>
        <dbReference type="ChEBI" id="CHEBI:29103"/>
    </reaction>
    <physiologicalReaction direction="right-to-left" evidence="1">
        <dbReference type="Rhea" id="RHEA:28492"/>
    </physiologicalReaction>
</comment>
<comment type="subcellular location">
    <subcellularLocation>
        <location evidence="1">Cell membrane</location>
        <topology evidence="1">Multi-pass membrane protein</topology>
    </subcellularLocation>
</comment>
<comment type="similarity">
    <text evidence="1">Belongs to the HAK/KUP transporter (TC 2.A.72) family.</text>
</comment>
<evidence type="ECO:0000255" key="1">
    <source>
        <dbReference type="HAMAP-Rule" id="MF_01522"/>
    </source>
</evidence>
<protein>
    <recommendedName>
        <fullName evidence="1">Probable potassium transport system protein Kup</fullName>
    </recommendedName>
</protein>
<feature type="chain" id="PRO_0000209014" description="Probable potassium transport system protein Kup">
    <location>
        <begin position="1"/>
        <end position="668"/>
    </location>
</feature>
<feature type="transmembrane region" description="Helical" evidence="1">
    <location>
        <begin position="17"/>
        <end position="37"/>
    </location>
</feature>
<feature type="transmembrane region" description="Helical" evidence="1">
    <location>
        <begin position="59"/>
        <end position="79"/>
    </location>
</feature>
<feature type="transmembrane region" description="Helical" evidence="1">
    <location>
        <begin position="104"/>
        <end position="124"/>
    </location>
</feature>
<feature type="transmembrane region" description="Helical" evidence="1">
    <location>
        <begin position="148"/>
        <end position="168"/>
    </location>
</feature>
<feature type="transmembrane region" description="Helical" evidence="1">
    <location>
        <begin position="175"/>
        <end position="195"/>
    </location>
</feature>
<feature type="transmembrane region" description="Helical" evidence="1">
    <location>
        <begin position="221"/>
        <end position="241"/>
    </location>
</feature>
<feature type="transmembrane region" description="Helical" evidence="1">
    <location>
        <begin position="256"/>
        <end position="276"/>
    </location>
</feature>
<feature type="transmembrane region" description="Helical" evidence="1">
    <location>
        <begin position="299"/>
        <end position="319"/>
    </location>
</feature>
<feature type="transmembrane region" description="Helical" evidence="1">
    <location>
        <begin position="350"/>
        <end position="370"/>
    </location>
</feature>
<feature type="transmembrane region" description="Helical" evidence="1">
    <location>
        <begin position="380"/>
        <end position="400"/>
    </location>
</feature>
<feature type="transmembrane region" description="Helical" evidence="1">
    <location>
        <begin position="403"/>
        <end position="423"/>
    </location>
</feature>
<feature type="transmembrane region" description="Helical" evidence="1">
    <location>
        <begin position="430"/>
        <end position="450"/>
    </location>
</feature>
<keyword id="KW-1003">Cell membrane</keyword>
<keyword id="KW-0406">Ion transport</keyword>
<keyword id="KW-0472">Membrane</keyword>
<keyword id="KW-0630">Potassium</keyword>
<keyword id="KW-0633">Potassium transport</keyword>
<keyword id="KW-1185">Reference proteome</keyword>
<keyword id="KW-0769">Symport</keyword>
<keyword id="KW-0812">Transmembrane</keyword>
<keyword id="KW-1133">Transmembrane helix</keyword>
<keyword id="KW-0813">Transport</keyword>
<organism>
    <name type="scientific">Enterococcus faecalis (strain ATCC 700802 / V583)</name>
    <dbReference type="NCBI Taxonomy" id="226185"/>
    <lineage>
        <taxon>Bacteria</taxon>
        <taxon>Bacillati</taxon>
        <taxon>Bacillota</taxon>
        <taxon>Bacilli</taxon>
        <taxon>Lactobacillales</taxon>
        <taxon>Enterococcaceae</taxon>
        <taxon>Enterococcus</taxon>
    </lineage>
</organism>
<dbReference type="EMBL" id="AE016830">
    <property type="protein sequence ID" value="AAO80682.1"/>
    <property type="molecule type" value="Genomic_DNA"/>
</dbReference>
<dbReference type="RefSeq" id="NP_814612.1">
    <property type="nucleotide sequence ID" value="NC_004668.1"/>
</dbReference>
<dbReference type="RefSeq" id="WP_002387003.1">
    <property type="nucleotide sequence ID" value="NZ_KE136527.1"/>
</dbReference>
<dbReference type="EnsemblBacteria" id="AAO80682">
    <property type="protein sequence ID" value="AAO80682"/>
    <property type="gene ID" value="EF_0872"/>
</dbReference>
<dbReference type="KEGG" id="efa:EF0872"/>
<dbReference type="PATRIC" id="fig|226185.45.peg.3082"/>
<dbReference type="eggNOG" id="COG3158">
    <property type="taxonomic scope" value="Bacteria"/>
</dbReference>
<dbReference type="HOGENOM" id="CLU_008142_4_1_9"/>
<dbReference type="Proteomes" id="UP000001415">
    <property type="component" value="Chromosome"/>
</dbReference>
<dbReference type="GO" id="GO:0005886">
    <property type="term" value="C:plasma membrane"/>
    <property type="evidence" value="ECO:0007669"/>
    <property type="project" value="UniProtKB-SubCell"/>
</dbReference>
<dbReference type="GO" id="GO:0015079">
    <property type="term" value="F:potassium ion transmembrane transporter activity"/>
    <property type="evidence" value="ECO:0007669"/>
    <property type="project" value="UniProtKB-UniRule"/>
</dbReference>
<dbReference type="GO" id="GO:0015293">
    <property type="term" value="F:symporter activity"/>
    <property type="evidence" value="ECO:0007669"/>
    <property type="project" value="UniProtKB-UniRule"/>
</dbReference>
<dbReference type="HAMAP" id="MF_01522">
    <property type="entry name" value="Kup"/>
    <property type="match status" value="1"/>
</dbReference>
<dbReference type="InterPro" id="IPR003855">
    <property type="entry name" value="K+_transporter"/>
</dbReference>
<dbReference type="InterPro" id="IPR053952">
    <property type="entry name" value="K_trans_C"/>
</dbReference>
<dbReference type="InterPro" id="IPR053951">
    <property type="entry name" value="K_trans_N"/>
</dbReference>
<dbReference type="InterPro" id="IPR023051">
    <property type="entry name" value="Kup"/>
</dbReference>
<dbReference type="PANTHER" id="PTHR30540:SF83">
    <property type="entry name" value="K+ POTASSIUM TRANSPORTER"/>
    <property type="match status" value="1"/>
</dbReference>
<dbReference type="PANTHER" id="PTHR30540">
    <property type="entry name" value="OSMOTIC STRESS POTASSIUM TRANSPORTER"/>
    <property type="match status" value="1"/>
</dbReference>
<dbReference type="Pfam" id="PF02705">
    <property type="entry name" value="K_trans"/>
    <property type="match status" value="1"/>
</dbReference>
<dbReference type="Pfam" id="PF22776">
    <property type="entry name" value="K_trans_C"/>
    <property type="match status" value="1"/>
</dbReference>
<reference key="1">
    <citation type="journal article" date="2003" name="Science">
        <title>Role of mobile DNA in the evolution of vancomycin-resistant Enterococcus faecalis.</title>
        <authorList>
            <person name="Paulsen I.T."/>
            <person name="Banerjei L."/>
            <person name="Myers G.S.A."/>
            <person name="Nelson K.E."/>
            <person name="Seshadri R."/>
            <person name="Read T.D."/>
            <person name="Fouts D.E."/>
            <person name="Eisen J.A."/>
            <person name="Gill S.R."/>
            <person name="Heidelberg J.F."/>
            <person name="Tettelin H."/>
            <person name="Dodson R.J."/>
            <person name="Umayam L.A."/>
            <person name="Brinkac L.M."/>
            <person name="Beanan M.J."/>
            <person name="Daugherty S.C."/>
            <person name="DeBoy R.T."/>
            <person name="Durkin S.A."/>
            <person name="Kolonay J.F."/>
            <person name="Madupu R."/>
            <person name="Nelson W.C."/>
            <person name="Vamathevan J.J."/>
            <person name="Tran B."/>
            <person name="Upton J."/>
            <person name="Hansen T."/>
            <person name="Shetty J."/>
            <person name="Khouri H.M."/>
            <person name="Utterback T.R."/>
            <person name="Radune D."/>
            <person name="Ketchum K.A."/>
            <person name="Dougherty B.A."/>
            <person name="Fraser C.M."/>
        </authorList>
    </citation>
    <scope>NUCLEOTIDE SEQUENCE [LARGE SCALE GENOMIC DNA]</scope>
    <source>
        <strain>ATCC 700802 / V583</strain>
    </source>
</reference>
<accession>Q837G9</accession>
<sequence length="668" mass="74712">MLHKAEGFDRRKFTMAGILVAMGVVYGDIGTSPLYVMKAIVGDNGGLARVSESFILGSVSLIFWTLTILTTIKYVVIALNADNHGEGGIFSLYTLVRKKSKYLIIPAMIGGAALLADGVLTPAVTVTTAIEGLRGIPAFFERFGNDQTIIVVITLTIILILFSVQRFGTELVGKAFGPIMFLWFTFLGIIGLMNFSQDWTVIRALNPYYALQLLVSPENKLGLFILGNIFLATTGAEALYSDLGHVGKMNIRISWPYIKICLILNYLGQAAWLLTVKENPEMQALAEINPFFQMIPRGILVFGVVFATIAAVIASQALISGSYTLVSEAIKLKLLPRLKIIYPGSNIGQMYIPAVNLILWLACSAIVLAFRTSTHMEAAYGLSITITMLMTTILLLFYLLDKIPAWSAYLISLFFAAIEVVFFFSSAAKFFHGGYVAVGMAVFLLCIMIIWERGNEIKEATAEQVSLKKYVPQLKALKEDTSVPMYQTNVVFLTSDRVDGEINRNIIYSILDKQPKRANVYWFVNVQVTDEPFTQEYSVDMLGTDFIVQVQLYLGFHISQEVNVYLRQIVHDLMKTGRLPKQPQRYSLTPGREVGDFQFVLIQEELSNVSELKKWDRQIMQAKLAIKNLTTSPESWFGLEYSEVKYESVPLIIGPQRKTHLVERKNRS</sequence>
<name>KUP_ENTFA</name>
<proteinExistence type="inferred from homology"/>
<gene>
    <name evidence="1" type="primary">kup</name>
    <name type="ordered locus">EF_0872</name>
</gene>